<feature type="chain" id="PRO_0000075840" description="Mechanosensory protein 3">
    <location>
        <begin position="1"/>
        <end position="321"/>
    </location>
</feature>
<feature type="domain" description="LIM zinc-binding 1" evidence="2">
    <location>
        <begin position="27"/>
        <end position="86"/>
    </location>
</feature>
<feature type="domain" description="LIM zinc-binding 2" evidence="2">
    <location>
        <begin position="87"/>
        <end position="152"/>
    </location>
</feature>
<feature type="DNA-binding region" description="Homeobox" evidence="1">
    <location>
        <begin position="217"/>
        <end position="276"/>
    </location>
</feature>
<feature type="splice variant" id="VSP_058152" description="In isoform c." evidence="9">
    <location>
        <begin position="1"/>
        <end position="43"/>
    </location>
</feature>
<feature type="mutagenesis site" description="In e1338; homeotic transformation of ALM to BDU neurons, based on altered cell body and axonal morphology and ectopically expressed BDU markers in ALM, including abnormal expression of ceh-14, flp-10, nlp-1, ser-2 and zig-3. Abnormal ectopic expression of ALN markers lad-2 and cho-1 in tail neurons. PVD neurons have severe dendritic branching defects, and significantly longer axonal projection in the ventral nerve cord. On either egl-44 or egl-46 mutant backgrounds, abolishes expression of tyramine receptor ser-2. Abolishes expression of alr-1 in a specific set of touch receptor neurons." evidence="5 6 8">
    <location>
        <begin position="69"/>
        <end position="321"/>
    </location>
</feature>
<gene>
    <name type="primary">mec-3</name>
    <name type="ORF">F01D4.6</name>
</gene>
<accession>P09088</accession>
<accession>B3GWD3</accession>
<accession>O02240</accession>
<accession>Q7YTQ4</accession>
<name>MEC3_CAEEL</name>
<reference key="1">
    <citation type="journal article" date="1988" name="Cell">
        <title>mec-3, a homeobox-containing gene that specifies differentiation of the touch receptor neurons in C. elegans.</title>
        <authorList>
            <person name="Way J.C."/>
            <person name="Chalfie M."/>
        </authorList>
    </citation>
    <scope>NUCLEOTIDE SEQUENCE [MRNA] (ISOFORM A)</scope>
    <scope>FUNCTION</scope>
</reference>
<reference key="2">
    <citation type="journal article" date="1992" name="EMBO J.">
        <title>Regulation of the mec-3 gene by the C.elegans homeoproteins UNC-86 and MEC-3.</title>
        <authorList>
            <person name="Xue D."/>
            <person name="Finney M."/>
            <person name="Ruvkun G."/>
            <person name="Chalfie M."/>
        </authorList>
    </citation>
    <scope>NUCLEOTIDE SEQUENCE [GENOMIC DNA]</scope>
    <scope>SEQUENCE REVISION</scope>
    <scope>FUNCTION</scope>
</reference>
<reference key="3">
    <citation type="journal article" date="1998" name="Science">
        <title>Genome sequence of the nematode C. elegans: a platform for investigating biology.</title>
        <authorList>
            <consortium name="The C. elegans sequencing consortium"/>
        </authorList>
    </citation>
    <scope>NUCLEOTIDE SEQUENCE [LARGE SCALE GENOMIC DNA]</scope>
    <scope>ALTERNATIVE SPLICING</scope>
    <source>
        <strain>Bristol N2</strain>
    </source>
</reference>
<reference key="4">
    <citation type="journal article" date="2000" name="EMBO J.">
        <title>Protein interaction surface of the POU transcription factor UNC-86 selectively used in touch neurons.</title>
        <authorList>
            <person name="Rohrig S."/>
            <person name="Rockelein I."/>
            <person name="Donhauser R."/>
            <person name="Baumeister R."/>
        </authorList>
    </citation>
    <scope>FUNCTION</scope>
    <scope>INTERACTION WITH UNC-86</scope>
    <scope>TISSUE SPECIFICITY</scope>
</reference>
<reference evidence="9" key="5">
    <citation type="journal article" date="2011" name="Proc. Natl. Acad. Sci. U.S.A.">
        <title>Caenorhabditis elegans aristaless/Arx gene alr-1 restricts variable gene expression.</title>
        <authorList>
            <person name="Topalidou I."/>
            <person name="van Oudenaarden A."/>
            <person name="Chalfie M."/>
        </authorList>
    </citation>
    <scope>FUNCTION</scope>
    <scope>MUTAGENESIS OF 69-TRP--ASP-321</scope>
</reference>
<reference key="6">
    <citation type="journal article" date="2015" name="Dev. Cell">
        <title>A competition mechanism for a homeotic neuron identity transformation in C. elegans.</title>
        <authorList>
            <person name="Gordon P.M."/>
            <person name="Hobert O."/>
        </authorList>
    </citation>
    <scope>FUNCTION</scope>
    <scope>MUTAGENESIS OF 69-TRP--ASP-321</scope>
</reference>
<reference key="7">
    <citation type="journal article" date="2017" name="Dev. Biol.">
        <title>Separate transcriptionally regulated pathways specify distinct classes of sister dendrites in a nociceptive neuron.</title>
        <authorList>
            <person name="O'Brien B.M.J."/>
            <person name="Palumbos S.D."/>
            <person name="Novakovic M."/>
            <person name="Shang X."/>
            <person name="Sundararajan L."/>
            <person name="Miller D.M. III"/>
        </authorList>
    </citation>
    <scope>FUNCTION</scope>
    <scope>MUTAGENESIS OF 69-TRP--ASP-321</scope>
</reference>
<comment type="function">
    <text evidence="3 4 6 7 8">Transcription factor (PubMed:10899123, PubMed:26096732). Specifies differentiation of the set of six touch receptor neurons (TRNs) (PubMed:2898300). May positively modulate expression of both its own gene and also of homeobox ARX homolog alr-1 in TRNs, forming a positive feedback loop with alr-1, thereby restricting the variability of expression of mec-3 (PubMed:21368126). Required to determine the identity of ALM sensory neurons, acting by interacting with unc-86, thereby preventing unc-86 cooperating with pag-3 to induce BDU-neuron specific genes (PubMed:26096732). Binds cooperatively as a heterodimer with unc-86 to sites in the mec-3 gene promoter (PubMed:10899123, PubMed:1361171). Promotes outgrowth of lateral dendritic branches on the PVD nociceptive neurons, probably acting both directly, and upstream of zinc finger protein egl-46 (PubMed:29031632).</text>
</comment>
<comment type="subunit">
    <text evidence="3">Interacts with unc-86; the heterooligomer binds to the promoters of mec-3, mec-4 and mec-7.</text>
</comment>
<comment type="subcellular location">
    <subcellularLocation>
        <location>Nucleus</location>
    </subcellularLocation>
</comment>
<comment type="alternative products">
    <event type="alternative splicing"/>
    <isoform>
        <id>P09088-1</id>
        <name evidence="10">a</name>
        <sequence type="displayed"/>
    </isoform>
    <isoform>
        <id>P09088-3</id>
        <name evidence="11">c</name>
        <sequence type="described" ref="VSP_058152"/>
    </isoform>
</comment>
<comment type="tissue specificity">
    <text evidence="3">Expressed in the mechanosensory neurons ALML, ALMR, PLML, PLMR, AVM and PVM, and the FLPL and FLPR neurons.</text>
</comment>
<dbReference type="EMBL" id="L02877">
    <property type="protein sequence ID" value="AAA50614.1"/>
    <property type="molecule type" value="mRNA"/>
</dbReference>
<dbReference type="EMBL" id="M20244">
    <property type="protein sequence ID" value="AAA28108.1"/>
    <property type="molecule type" value="Genomic_DNA"/>
</dbReference>
<dbReference type="EMBL" id="Z81054">
    <property type="protein sequence ID" value="CAB02885.3"/>
    <property type="molecule type" value="Genomic_DNA"/>
</dbReference>
<dbReference type="EMBL" id="BX284604">
    <property type="protein sequence ID" value="CAQ58102.1"/>
    <property type="molecule type" value="Genomic_DNA"/>
</dbReference>
<dbReference type="PIR" id="S28390">
    <property type="entry name" value="S28390"/>
</dbReference>
<dbReference type="PIR" id="T20458">
    <property type="entry name" value="T20458"/>
</dbReference>
<dbReference type="RefSeq" id="NP_001023111.1">
    <molecule id="P09088-1"/>
    <property type="nucleotide sequence ID" value="NM_001027940.5"/>
</dbReference>
<dbReference type="RefSeq" id="NP_001129852.1">
    <molecule id="P09088-3"/>
    <property type="nucleotide sequence ID" value="NM_001136380.4"/>
</dbReference>
<dbReference type="SMR" id="P09088"/>
<dbReference type="BioGRID" id="43040">
    <property type="interactions" value="83"/>
</dbReference>
<dbReference type="FunCoup" id="P09088">
    <property type="interactions" value="64"/>
</dbReference>
<dbReference type="IntAct" id="P09088">
    <property type="interactions" value="77"/>
</dbReference>
<dbReference type="STRING" id="6239.F01D4.6a.1"/>
<dbReference type="PaxDb" id="6239-F01D4.6a"/>
<dbReference type="EnsemblMetazoa" id="F01D4.6a.1">
    <molecule id="P09088-1"/>
    <property type="protein sequence ID" value="F01D4.6a.1"/>
    <property type="gene ID" value="WBGene00003167"/>
</dbReference>
<dbReference type="EnsemblMetazoa" id="F01D4.6c.1">
    <molecule id="P09088-3"/>
    <property type="protein sequence ID" value="F01D4.6c.1"/>
    <property type="gene ID" value="WBGene00003167"/>
</dbReference>
<dbReference type="GeneID" id="177938"/>
<dbReference type="KEGG" id="cel:CELE_F01D4.6"/>
<dbReference type="UCSC" id="F01D4.6a">
    <molecule id="P09088-1"/>
    <property type="organism name" value="c. elegans"/>
</dbReference>
<dbReference type="AGR" id="WB:WBGene00003167"/>
<dbReference type="CTD" id="177938"/>
<dbReference type="WormBase" id="F01D4.6a">
    <molecule id="P09088-1"/>
    <property type="protein sequence ID" value="CE27422"/>
    <property type="gene ID" value="WBGene00003167"/>
    <property type="gene designation" value="mec-3"/>
</dbReference>
<dbReference type="WormBase" id="F01D4.6c">
    <molecule id="P09088-3"/>
    <property type="protein sequence ID" value="CE42646"/>
    <property type="gene ID" value="WBGene00003167"/>
    <property type="gene designation" value="mec-3"/>
</dbReference>
<dbReference type="eggNOG" id="KOG0490">
    <property type="taxonomic scope" value="Eukaryota"/>
</dbReference>
<dbReference type="GeneTree" id="ENSGT00940000164085"/>
<dbReference type="InParanoid" id="P09088"/>
<dbReference type="OMA" id="SYHENCV"/>
<dbReference type="OrthoDB" id="10068367at2759"/>
<dbReference type="PhylomeDB" id="P09088"/>
<dbReference type="SignaLink" id="P09088"/>
<dbReference type="PRO" id="PR:P09088"/>
<dbReference type="Proteomes" id="UP000001940">
    <property type="component" value="Chromosome IV"/>
</dbReference>
<dbReference type="Bgee" id="WBGene00003167">
    <property type="expression patterns" value="Expressed in larva and 3 other cell types or tissues"/>
</dbReference>
<dbReference type="ExpressionAtlas" id="P09088">
    <property type="expression patterns" value="baseline and differential"/>
</dbReference>
<dbReference type="GO" id="GO:0005634">
    <property type="term" value="C:nucleus"/>
    <property type="evidence" value="ECO:0000318"/>
    <property type="project" value="GO_Central"/>
</dbReference>
<dbReference type="GO" id="GO:0090575">
    <property type="term" value="C:RNA polymerase II transcription regulator complex"/>
    <property type="evidence" value="ECO:0000314"/>
    <property type="project" value="UniProtKB"/>
</dbReference>
<dbReference type="GO" id="GO:0000981">
    <property type="term" value="F:DNA-binding transcription factor activity, RNA polymerase II-specific"/>
    <property type="evidence" value="ECO:0000314"/>
    <property type="project" value="WormBase"/>
</dbReference>
<dbReference type="GO" id="GO:0046872">
    <property type="term" value="F:metal ion binding"/>
    <property type="evidence" value="ECO:0007669"/>
    <property type="project" value="UniProtKB-KW"/>
</dbReference>
<dbReference type="GO" id="GO:0000977">
    <property type="term" value="F:RNA polymerase II transcription regulatory region sequence-specific DNA binding"/>
    <property type="evidence" value="ECO:0000314"/>
    <property type="project" value="WormBase"/>
</dbReference>
<dbReference type="GO" id="GO:0061629">
    <property type="term" value="F:RNA polymerase II-specific DNA-binding transcription factor binding"/>
    <property type="evidence" value="ECO:0000353"/>
    <property type="project" value="UniProtKB"/>
</dbReference>
<dbReference type="GO" id="GO:0003713">
    <property type="term" value="F:transcription coactivator activity"/>
    <property type="evidence" value="ECO:0000314"/>
    <property type="project" value="UniProtKB"/>
</dbReference>
<dbReference type="GO" id="GO:0007638">
    <property type="term" value="P:mechanosensory behavior"/>
    <property type="evidence" value="ECO:0000315"/>
    <property type="project" value="WormBase"/>
</dbReference>
<dbReference type="GO" id="GO:0030182">
    <property type="term" value="P:neuron differentiation"/>
    <property type="evidence" value="ECO:0000315"/>
    <property type="project" value="WormBase"/>
</dbReference>
<dbReference type="GO" id="GO:0106027">
    <property type="term" value="P:neuron projection organization"/>
    <property type="evidence" value="ECO:0000315"/>
    <property type="project" value="UniProtKB"/>
</dbReference>
<dbReference type="GO" id="GO:0045944">
    <property type="term" value="P:positive regulation of transcription by RNA polymerase II"/>
    <property type="evidence" value="ECO:0000314"/>
    <property type="project" value="WormBase"/>
</dbReference>
<dbReference type="GO" id="GO:0006355">
    <property type="term" value="P:regulation of DNA-templated transcription"/>
    <property type="evidence" value="ECO:0000315"/>
    <property type="project" value="UniProtKB"/>
</dbReference>
<dbReference type="GO" id="GO:0006357">
    <property type="term" value="P:regulation of transcription by RNA polymerase II"/>
    <property type="evidence" value="ECO:0000318"/>
    <property type="project" value="GO_Central"/>
</dbReference>
<dbReference type="GO" id="GO:0009612">
    <property type="term" value="P:response to mechanical stimulus"/>
    <property type="evidence" value="ECO:0000315"/>
    <property type="project" value="WormBase"/>
</dbReference>
<dbReference type="CDD" id="cd00086">
    <property type="entry name" value="homeodomain"/>
    <property type="match status" value="1"/>
</dbReference>
<dbReference type="FunFam" id="1.10.10.60:FF:000620">
    <property type="entry name" value="Mechanosensory protein 3"/>
    <property type="match status" value="1"/>
</dbReference>
<dbReference type="FunFam" id="2.10.110.10:FF:000137">
    <property type="entry name" value="Mechanosensory protein 3"/>
    <property type="match status" value="1"/>
</dbReference>
<dbReference type="Gene3D" id="2.10.110.10">
    <property type="entry name" value="Cysteine Rich Protein"/>
    <property type="match status" value="2"/>
</dbReference>
<dbReference type="Gene3D" id="1.10.10.60">
    <property type="entry name" value="Homeodomain-like"/>
    <property type="match status" value="1"/>
</dbReference>
<dbReference type="InterPro" id="IPR001356">
    <property type="entry name" value="HD"/>
</dbReference>
<dbReference type="InterPro" id="IPR017970">
    <property type="entry name" value="Homeobox_CS"/>
</dbReference>
<dbReference type="InterPro" id="IPR009057">
    <property type="entry name" value="Homeodomain-like_sf"/>
</dbReference>
<dbReference type="InterPro" id="IPR050453">
    <property type="entry name" value="LIM_Homeobox_TF"/>
</dbReference>
<dbReference type="InterPro" id="IPR001781">
    <property type="entry name" value="Znf_LIM"/>
</dbReference>
<dbReference type="PANTHER" id="PTHR24208">
    <property type="entry name" value="LIM/HOMEOBOX PROTEIN LHX"/>
    <property type="match status" value="1"/>
</dbReference>
<dbReference type="PANTHER" id="PTHR24208:SF170">
    <property type="entry name" value="MECHANOSENSORY PROTEIN 3"/>
    <property type="match status" value="1"/>
</dbReference>
<dbReference type="Pfam" id="PF00046">
    <property type="entry name" value="Homeodomain"/>
    <property type="match status" value="1"/>
</dbReference>
<dbReference type="Pfam" id="PF00412">
    <property type="entry name" value="LIM"/>
    <property type="match status" value="2"/>
</dbReference>
<dbReference type="SMART" id="SM00389">
    <property type="entry name" value="HOX"/>
    <property type="match status" value="1"/>
</dbReference>
<dbReference type="SMART" id="SM00132">
    <property type="entry name" value="LIM"/>
    <property type="match status" value="2"/>
</dbReference>
<dbReference type="SUPFAM" id="SSF57716">
    <property type="entry name" value="Glucocorticoid receptor-like (DNA-binding domain)"/>
    <property type="match status" value="1"/>
</dbReference>
<dbReference type="SUPFAM" id="SSF46689">
    <property type="entry name" value="Homeodomain-like"/>
    <property type="match status" value="1"/>
</dbReference>
<dbReference type="PROSITE" id="PS00027">
    <property type="entry name" value="HOMEOBOX_1"/>
    <property type="match status" value="1"/>
</dbReference>
<dbReference type="PROSITE" id="PS50071">
    <property type="entry name" value="HOMEOBOX_2"/>
    <property type="match status" value="1"/>
</dbReference>
<dbReference type="PROSITE" id="PS00478">
    <property type="entry name" value="LIM_DOMAIN_1"/>
    <property type="match status" value="2"/>
</dbReference>
<dbReference type="PROSITE" id="PS50023">
    <property type="entry name" value="LIM_DOMAIN_2"/>
    <property type="match status" value="2"/>
</dbReference>
<organism>
    <name type="scientific">Caenorhabditis elegans</name>
    <dbReference type="NCBI Taxonomy" id="6239"/>
    <lineage>
        <taxon>Eukaryota</taxon>
        <taxon>Metazoa</taxon>
        <taxon>Ecdysozoa</taxon>
        <taxon>Nematoda</taxon>
        <taxon>Chromadorea</taxon>
        <taxon>Rhabditida</taxon>
        <taxon>Rhabditina</taxon>
        <taxon>Rhabditomorpha</taxon>
        <taxon>Rhabditoidea</taxon>
        <taxon>Rhabditidae</taxon>
        <taxon>Peloderinae</taxon>
        <taxon>Caenorhabditis</taxon>
    </lineage>
</organism>
<keyword id="KW-0025">Alternative splicing</keyword>
<keyword id="KW-0217">Developmental protein</keyword>
<keyword id="KW-0238">DNA-binding</keyword>
<keyword id="KW-0371">Homeobox</keyword>
<keyword id="KW-0440">LIM domain</keyword>
<keyword id="KW-0479">Metal-binding</keyword>
<keyword id="KW-0539">Nucleus</keyword>
<keyword id="KW-1185">Reference proteome</keyword>
<keyword id="KW-0677">Repeat</keyword>
<keyword id="KW-0804">Transcription</keyword>
<keyword id="KW-0805">Transcription regulation</keyword>
<keyword id="KW-0862">Zinc</keyword>
<evidence type="ECO:0000255" key="1">
    <source>
        <dbReference type="PROSITE-ProRule" id="PRU00108"/>
    </source>
</evidence>
<evidence type="ECO:0000255" key="2">
    <source>
        <dbReference type="PROSITE-ProRule" id="PRU00125"/>
    </source>
</evidence>
<evidence type="ECO:0000269" key="3">
    <source>
    </source>
</evidence>
<evidence type="ECO:0000269" key="4">
    <source>
    </source>
</evidence>
<evidence type="ECO:0000269" key="5">
    <source>
    </source>
</evidence>
<evidence type="ECO:0000269" key="6">
    <source>
    </source>
</evidence>
<evidence type="ECO:0000269" key="7">
    <source>
    </source>
</evidence>
<evidence type="ECO:0000269" key="8">
    <source>
    </source>
</evidence>
<evidence type="ECO:0000305" key="9"/>
<evidence type="ECO:0000312" key="10">
    <source>
        <dbReference type="WormBase" id="F01D4.6a"/>
    </source>
</evidence>
<evidence type="ECO:0000312" key="11">
    <source>
        <dbReference type="WormBase" id="F01D4.6c"/>
    </source>
</evidence>
<proteinExistence type="evidence at protein level"/>
<sequence>MEMLESKPLSAISMVIDSIGVDHENQNKCNCCNEQIYDRYIYRMDNRSYHENCVKCTICESPLAEKCFWKNGRIYCSQHYYKDHSIHRCAGCKKGVSPTDMVYKLKAGLVFHVECHCCSLCGRHLSPGEQILVDDTMMTVSCMSHYPPQMDDNAPGAIGSAVDIPSCSTENPIAPYPIDESFSSAFQVKKEVDAYGYNFEHYSFSDFCDDDSRMLKRRGPRTTIKQNQLDVLNEMFSNTPKPSKHARAKLALETGLSMRVIQVWFQNRRSKERRLKHLCNYLRHYEQRGLIPPPIHFRNEEMDTTDFNAFCGNFEEEDDED</sequence>
<protein>
    <recommendedName>
        <fullName>Mechanosensory protein 3</fullName>
    </recommendedName>
</protein>